<protein>
    <recommendedName>
        <fullName evidence="1">Iron-sulfur cluster carrier protein</fullName>
    </recommendedName>
</protein>
<keyword id="KW-0067">ATP-binding</keyword>
<keyword id="KW-0378">Hydrolase</keyword>
<keyword id="KW-0408">Iron</keyword>
<keyword id="KW-0411">Iron-sulfur</keyword>
<keyword id="KW-0479">Metal-binding</keyword>
<keyword id="KW-0547">Nucleotide-binding</keyword>
<feature type="chain" id="PRO_0000281000" description="Iron-sulfur cluster carrier protein">
    <location>
        <begin position="1"/>
        <end position="318"/>
    </location>
</feature>
<feature type="binding site" evidence="1">
    <location>
        <begin position="105"/>
        <end position="112"/>
    </location>
    <ligand>
        <name>ATP</name>
        <dbReference type="ChEBI" id="CHEBI:30616"/>
    </ligand>
</feature>
<organism>
    <name type="scientific">Rickettsia felis (strain ATCC VR-1525 / URRWXCal2)</name>
    <name type="common">Rickettsia azadi</name>
    <dbReference type="NCBI Taxonomy" id="315456"/>
    <lineage>
        <taxon>Bacteria</taxon>
        <taxon>Pseudomonadati</taxon>
        <taxon>Pseudomonadota</taxon>
        <taxon>Alphaproteobacteria</taxon>
        <taxon>Rickettsiales</taxon>
        <taxon>Rickettsiaceae</taxon>
        <taxon>Rickettsieae</taxon>
        <taxon>Rickettsia</taxon>
        <taxon>spotted fever group</taxon>
    </lineage>
</organism>
<proteinExistence type="inferred from homology"/>
<gene>
    <name type="primary">mrp</name>
    <name type="ordered locus">RF_1169</name>
</gene>
<accession>Q4UKB5</accession>
<reference key="1">
    <citation type="journal article" date="2005" name="PLoS Biol.">
        <title>The genome sequence of Rickettsia felis identifies the first putative conjugative plasmid in an obligate intracellular parasite.</title>
        <authorList>
            <person name="Ogata H."/>
            <person name="Renesto P."/>
            <person name="Audic S."/>
            <person name="Robert C."/>
            <person name="Blanc G."/>
            <person name="Fournier P.-E."/>
            <person name="Parinello H."/>
            <person name="Claverie J.-M."/>
            <person name="Raoult D."/>
        </authorList>
    </citation>
    <scope>NUCLEOTIDE SEQUENCE [LARGE SCALE GENOMIC DNA]</scope>
    <source>
        <strain>ATCC VR-1525 / URRWXCal2</strain>
    </source>
</reference>
<name>APBC_RICFE</name>
<dbReference type="EMBL" id="CP000053">
    <property type="protein sequence ID" value="AAY62020.1"/>
    <property type="molecule type" value="Genomic_DNA"/>
</dbReference>
<dbReference type="SMR" id="Q4UKB5"/>
<dbReference type="STRING" id="315456.RF_1169"/>
<dbReference type="KEGG" id="rfe:RF_1169"/>
<dbReference type="eggNOG" id="COG0489">
    <property type="taxonomic scope" value="Bacteria"/>
</dbReference>
<dbReference type="HOGENOM" id="CLU_024839_0_0_5"/>
<dbReference type="OrthoDB" id="9809679at2"/>
<dbReference type="Proteomes" id="UP000008548">
    <property type="component" value="Chromosome"/>
</dbReference>
<dbReference type="GO" id="GO:0051539">
    <property type="term" value="F:4 iron, 4 sulfur cluster binding"/>
    <property type="evidence" value="ECO:0007669"/>
    <property type="project" value="TreeGrafter"/>
</dbReference>
<dbReference type="GO" id="GO:0005524">
    <property type="term" value="F:ATP binding"/>
    <property type="evidence" value="ECO:0007669"/>
    <property type="project" value="UniProtKB-UniRule"/>
</dbReference>
<dbReference type="GO" id="GO:0016887">
    <property type="term" value="F:ATP hydrolysis activity"/>
    <property type="evidence" value="ECO:0007669"/>
    <property type="project" value="UniProtKB-UniRule"/>
</dbReference>
<dbReference type="GO" id="GO:0140663">
    <property type="term" value="F:ATP-dependent FeS chaperone activity"/>
    <property type="evidence" value="ECO:0007669"/>
    <property type="project" value="InterPro"/>
</dbReference>
<dbReference type="GO" id="GO:0046872">
    <property type="term" value="F:metal ion binding"/>
    <property type="evidence" value="ECO:0007669"/>
    <property type="project" value="UniProtKB-KW"/>
</dbReference>
<dbReference type="GO" id="GO:0016226">
    <property type="term" value="P:iron-sulfur cluster assembly"/>
    <property type="evidence" value="ECO:0007669"/>
    <property type="project" value="InterPro"/>
</dbReference>
<dbReference type="CDD" id="cd02037">
    <property type="entry name" value="Mrp_NBP35"/>
    <property type="match status" value="1"/>
</dbReference>
<dbReference type="Gene3D" id="3.40.50.300">
    <property type="entry name" value="P-loop containing nucleotide triphosphate hydrolases"/>
    <property type="match status" value="1"/>
</dbReference>
<dbReference type="HAMAP" id="MF_02040">
    <property type="entry name" value="Mrp_NBP35"/>
    <property type="match status" value="1"/>
</dbReference>
<dbReference type="InterPro" id="IPR000808">
    <property type="entry name" value="Mrp-like_CS"/>
</dbReference>
<dbReference type="InterPro" id="IPR019591">
    <property type="entry name" value="Mrp/NBP35_ATP-bd"/>
</dbReference>
<dbReference type="InterPro" id="IPR044304">
    <property type="entry name" value="NUBPL-like"/>
</dbReference>
<dbReference type="InterPro" id="IPR027417">
    <property type="entry name" value="P-loop_NTPase"/>
</dbReference>
<dbReference type="InterPro" id="IPR033756">
    <property type="entry name" value="YlxH/NBP35"/>
</dbReference>
<dbReference type="PANTHER" id="PTHR42961">
    <property type="entry name" value="IRON-SULFUR PROTEIN NUBPL"/>
    <property type="match status" value="1"/>
</dbReference>
<dbReference type="PANTHER" id="PTHR42961:SF2">
    <property type="entry name" value="IRON-SULFUR PROTEIN NUBPL"/>
    <property type="match status" value="1"/>
</dbReference>
<dbReference type="Pfam" id="PF10609">
    <property type="entry name" value="ParA"/>
    <property type="match status" value="1"/>
</dbReference>
<dbReference type="SUPFAM" id="SSF52540">
    <property type="entry name" value="P-loop containing nucleoside triphosphate hydrolases"/>
    <property type="match status" value="1"/>
</dbReference>
<dbReference type="PROSITE" id="PS01215">
    <property type="entry name" value="MRP"/>
    <property type="match status" value="1"/>
</dbReference>
<comment type="function">
    <text evidence="1">Binds and transfers iron-sulfur (Fe-S) clusters to target apoproteins. Can hydrolyze ATP.</text>
</comment>
<comment type="subunit">
    <text evidence="1">Homodimer.</text>
</comment>
<comment type="similarity">
    <text evidence="1">Belongs to the Mrp/NBP35 ATP-binding proteins family.</text>
</comment>
<sequence length="318" mass="35407">MADLHQKQIIDKLQHIIFKDGTFLNKVISDIIIKGNNIGFSIDISGKNKLEAEELKAKAIDKLNEISEINKITIVFTESKPMEKKAQKPKHFVENVKKIILVASGKGGVGKSTISALIAQQLSLENYRVGIVDADIYGPSIPHIFGINEVPKTKDGRIIPITVKSIQVISIGFFVKDHSAIIWRGPMASKTIYQLLSVTKWDNLDYLIIDMPPGTGDIHLSMLENYHLDGVIIVTTPQKISEIDVIRSIDLYQKLNLPILGIIENMSYMFESNSGGHLSQKYNIPLIAQIPIMPQIADACDKSLPLTDLLTLPLKEYL</sequence>
<evidence type="ECO:0000255" key="1">
    <source>
        <dbReference type="HAMAP-Rule" id="MF_02040"/>
    </source>
</evidence>